<feature type="chain" id="PRO_0000041332" description="RNA-directed RNA polymerase">
    <location>
        <begin position="1"/>
        <end position="818"/>
    </location>
</feature>
<feature type="chain" id="PRO_0000041333" description="Protein p33">
    <location>
        <begin position="1"/>
        <end position="296"/>
    </location>
</feature>
<feature type="domain" description="RdRp catalytic" evidence="1">
    <location>
        <begin position="524"/>
        <end position="641"/>
    </location>
</feature>
<protein>
    <recommendedName>
        <fullName>RNA-directed RNA polymerase</fullName>
        <ecNumber>2.7.7.48</ecNumber>
    </recommendedName>
    <alternativeName>
        <fullName>Protein p92</fullName>
    </alternativeName>
    <component>
        <recommendedName>
            <fullName>Protein p33</fullName>
        </recommendedName>
    </component>
</protein>
<evidence type="ECO:0000255" key="1">
    <source>
        <dbReference type="PROSITE-ProRule" id="PRU00539"/>
    </source>
</evidence>
<evidence type="ECO:0000305" key="2"/>
<sequence length="818" mass="92120">MDTIKRMLWPKKEIFVGTFATGVERDTSVDIFQLVCRVVLRYMRTGKIENNTDSLGNFIVELLKTDCAAKWEWFMKRRRVGDYAKSLAIASIPVIPLLSYATMKKTVALRAFGNELSFNIRVPRPSVPKKGLLLRLAAGLALAPICALAMYATLPREKLSVFKLRTEARAHMEDEREATDCLVVEPARELKGKDGEDLLTGSRMTKVIASTGRPRRRPYAAKIAQVARAKVGYLKNTPENRLIYQRVMIEIMDKDCVRYVDRDVILPLAIGCCFVYPDGVEESAALWGSDESLGVKXGGLVRLPGVVTQTNRDIPSGVLLPQEVLEVRAGPPNAKDRNIFMVAGCPSQARFLVHNHCLKNLKRGLVERVFCVERNGQLTRTPQPTKGAFGRLSPFRKAVCEKVGVAHRLGYDGFLSYYSGAKLRTYTRAVESLHITPVSERDSHLTTFVKAEKISTAKGDPAPRVIQPRNPRYNVELGRYLRHMESKLMKAVDGVFGETTCIKGYTADEVGQIFRDKWDRFNKPVAIGLDASRFDQHCSVEALQFEHGFYRAMYPGNKLLSKLLDWQLHNKGKGYVPDGTITYRKEGCRMSGDINTSLGNYLLMCAMIYGYMRHLGINEYSLANCGDDCVLIVERRNLKQIQGTLPEYFLNLGYTMKVEPPVFQLEEVEFCQAHPVQFQGGWKMVRNVRTAMSKDVHCVNNIRDLATRRAWSNAQHHGGVALTSGIPVVEKFYSRFTLYEVPKKHQRIDTVTNVHKWRGSGGDYVVTPEARASFWAAFGLTGDEQLALEDRLDRWEMDLFGEEGVDAHEPSILDSAVA</sequence>
<name>RDRP_CNV</name>
<dbReference type="EC" id="2.7.7.48"/>
<dbReference type="EMBL" id="M25270">
    <property type="protein sequence ID" value="AAA42902.2"/>
    <property type="molecule type" value="Genomic_RNA"/>
</dbReference>
<dbReference type="PIR" id="JA0130">
    <property type="entry name" value="RRVGCN"/>
</dbReference>
<dbReference type="RefSeq" id="NP_040953.2">
    <property type="nucleotide sequence ID" value="NC_001469.1"/>
</dbReference>
<dbReference type="KEGG" id="vg:1493946"/>
<dbReference type="OrthoDB" id="12338at10239"/>
<dbReference type="Proteomes" id="UP000008565">
    <property type="component" value="Segment"/>
</dbReference>
<dbReference type="GO" id="GO:0000166">
    <property type="term" value="F:nucleotide binding"/>
    <property type="evidence" value="ECO:0007669"/>
    <property type="project" value="UniProtKB-KW"/>
</dbReference>
<dbReference type="GO" id="GO:0003723">
    <property type="term" value="F:RNA binding"/>
    <property type="evidence" value="ECO:0007669"/>
    <property type="project" value="InterPro"/>
</dbReference>
<dbReference type="GO" id="GO:0003968">
    <property type="term" value="F:RNA-directed RNA polymerase activity"/>
    <property type="evidence" value="ECO:0007669"/>
    <property type="project" value="UniProtKB-KW"/>
</dbReference>
<dbReference type="GO" id="GO:0039694">
    <property type="term" value="P:viral RNA genome replication"/>
    <property type="evidence" value="ECO:0007669"/>
    <property type="project" value="InterPro"/>
</dbReference>
<dbReference type="CDD" id="cd23236">
    <property type="entry name" value="Tombusvirus-like_RdRp"/>
    <property type="match status" value="1"/>
</dbReference>
<dbReference type="Gene3D" id="3.30.70.270">
    <property type="match status" value="1"/>
</dbReference>
<dbReference type="InterPro" id="IPR043502">
    <property type="entry name" value="DNA/RNA_pol_sf"/>
</dbReference>
<dbReference type="InterPro" id="IPR043128">
    <property type="entry name" value="Rev_trsase/Diguanyl_cyclase"/>
</dbReference>
<dbReference type="InterPro" id="IPR007094">
    <property type="entry name" value="RNA-dir_pol_PSvirus"/>
</dbReference>
<dbReference type="InterPro" id="IPR002166">
    <property type="entry name" value="RNA_pol_HCV"/>
</dbReference>
<dbReference type="InterPro" id="IPR013707">
    <property type="entry name" value="Tombusvirus_p33"/>
</dbReference>
<dbReference type="Pfam" id="PF00998">
    <property type="entry name" value="RdRP_3"/>
    <property type="match status" value="1"/>
</dbReference>
<dbReference type="Pfam" id="PF08500">
    <property type="entry name" value="Tombus_P33"/>
    <property type="match status" value="1"/>
</dbReference>
<dbReference type="SUPFAM" id="SSF56672">
    <property type="entry name" value="DNA/RNA polymerases"/>
    <property type="match status" value="1"/>
</dbReference>
<dbReference type="PROSITE" id="PS50507">
    <property type="entry name" value="RDRP_SSRNA_POS"/>
    <property type="match status" value="1"/>
</dbReference>
<accession>P15187</accession>
<comment type="function">
    <text evidence="2">RNA-dependent RNA polymerase that plays an essential role in the virus replication.</text>
</comment>
<comment type="catalytic activity">
    <reaction evidence="1">
        <text>RNA(n) + a ribonucleoside 5'-triphosphate = RNA(n+1) + diphosphate</text>
        <dbReference type="Rhea" id="RHEA:21248"/>
        <dbReference type="Rhea" id="RHEA-COMP:14527"/>
        <dbReference type="Rhea" id="RHEA-COMP:17342"/>
        <dbReference type="ChEBI" id="CHEBI:33019"/>
        <dbReference type="ChEBI" id="CHEBI:61557"/>
        <dbReference type="ChEBI" id="CHEBI:140395"/>
        <dbReference type="EC" id="2.7.7.48"/>
    </reaction>
</comment>
<comment type="miscellaneous">
    <text>Readthrough of the terminator UAG occurs at position 297.</text>
</comment>
<comment type="similarity">
    <text evidence="2">Belongs to the tombusviridae RNA polymerase family.</text>
</comment>
<gene>
    <name type="ORF">ORF1</name>
</gene>
<keyword id="KW-0547">Nucleotide-binding</keyword>
<keyword id="KW-0548">Nucleotidyltransferase</keyword>
<keyword id="KW-1159">RNA suppression of termination</keyword>
<keyword id="KW-0696">RNA-directed RNA polymerase</keyword>
<keyword id="KW-0808">Transferase</keyword>
<keyword id="KW-0693">Viral RNA replication</keyword>
<proteinExistence type="inferred from homology"/>
<reference key="1">
    <citation type="journal article" date="1989" name="Virology">
        <title>Complete nucleotide sequence of the cucumber necrosis virus genome.</title>
        <authorList>
            <person name="Rochon D.M."/>
            <person name="Tremaine J.H."/>
        </authorList>
    </citation>
    <scope>NUCLEOTIDE SEQUENCE [GENOMIC RNA]</scope>
</reference>
<organismHost>
    <name type="scientific">Cucumis sativus</name>
    <name type="common">Cucumber</name>
    <dbReference type="NCBI Taxonomy" id="3659"/>
</organismHost>
<organism>
    <name type="scientific">Cucumber necrosis virus</name>
    <name type="common">CNV</name>
    <dbReference type="NCBI Taxonomy" id="12143"/>
    <lineage>
        <taxon>Viruses</taxon>
        <taxon>Riboviria</taxon>
        <taxon>Orthornavirae</taxon>
        <taxon>Kitrinoviricota</taxon>
        <taxon>Tolucaviricetes</taxon>
        <taxon>Tolivirales</taxon>
        <taxon>Tombusviridae</taxon>
        <taxon>Procedovirinae</taxon>
        <taxon>Tombusvirus</taxon>
        <taxon>Tombusvirus cucumis</taxon>
    </lineage>
</organism>